<sequence>MMSCGGKKPVSKKTTPCCTKMGMKRGPWTVEEDEILVSFIKKEGEGRWRSLPKRAGLLRCGKSCRLRWMNYLRPSVKRGGITSDEEDLILRLHRLLGNRWSLIAGRIPGRTDNEIKNYWNTHLRKKLLRQGIDPQTHKPLDANNIHKPEEEVSGGQKYPLEPISSSHTDDTTVNGGDGDSKNSINVFGGEHGYEDFGFCYDDKFSSFLNSLINDVGDPFGNIIPISQPLQMDDCKDGIVGASSSSLGHD</sequence>
<comment type="function">
    <text evidence="3">Transcription activator, when associated with BHLH002/EGL3/MYC146, BHLH012/MYC1 or BHLH042/TT8.</text>
</comment>
<comment type="subunit">
    <text evidence="3">Interacts with BHLH002/EGL3/MYC146, BHLH012/MYC1 and BHLH042/TT8.</text>
</comment>
<comment type="subcellular location">
    <subcellularLocation>
        <location evidence="5">Nucleus</location>
    </subcellularLocation>
</comment>
<comment type="tissue specificity">
    <text evidence="4">Siliques.</text>
</comment>
<evidence type="ECO:0000255" key="1">
    <source>
        <dbReference type="PROSITE-ProRule" id="PRU00625"/>
    </source>
</evidence>
<evidence type="ECO:0000256" key="2">
    <source>
        <dbReference type="SAM" id="MobiDB-lite"/>
    </source>
</evidence>
<evidence type="ECO:0000269" key="3">
    <source>
    </source>
</evidence>
<evidence type="ECO:0000269" key="4">
    <source>
    </source>
</evidence>
<evidence type="ECO:0000305" key="5"/>
<reference key="1">
    <citation type="journal article" date="1996" name="FEBS Lett.">
        <title>A novel myb-related gene from Arabidopsis thaliana.</title>
        <authorList>
            <person name="Li S.F."/>
            <person name="Santini J.M."/>
            <person name="Nicolaou O."/>
            <person name="Parish R.W."/>
        </authorList>
    </citation>
    <scope>NUCLEOTIDE SEQUENCE [GENOMIC DNA]</scope>
    <source>
        <strain>cv. Landsberg erecta</strain>
    </source>
</reference>
<reference key="2">
    <citation type="submission" date="2004-01" db="EMBL/GenBank/DDBJ databases">
        <title>The MYB transcription factor family in Arabidopsis: a genome-wide cloning and expression pattern analysis.</title>
        <authorList>
            <person name="Qu L.-J."/>
            <person name="Gu H."/>
        </authorList>
    </citation>
    <scope>NUCLEOTIDE SEQUENCE [MRNA]</scope>
</reference>
<reference key="3">
    <citation type="journal article" date="2000" name="DNA Res.">
        <title>Structural analysis of Arabidopsis thaliana chromosome 3. II. Sequence features of the 4,251,695 bp regions covered by 90 P1, TAC and BAC clones.</title>
        <authorList>
            <person name="Kaneko T."/>
            <person name="Katoh T."/>
            <person name="Sato S."/>
            <person name="Nakamura Y."/>
            <person name="Asamizu E."/>
            <person name="Tabata S."/>
        </authorList>
    </citation>
    <scope>NUCLEOTIDE SEQUENCE [LARGE SCALE GENOMIC DNA]</scope>
    <source>
        <strain>cv. Columbia</strain>
    </source>
</reference>
<reference key="4">
    <citation type="journal article" date="2017" name="Plant J.">
        <title>Araport11: a complete reannotation of the Arabidopsis thaliana reference genome.</title>
        <authorList>
            <person name="Cheng C.Y."/>
            <person name="Krishnakumar V."/>
            <person name="Chan A.P."/>
            <person name="Thibaud-Nissen F."/>
            <person name="Schobel S."/>
            <person name="Town C.D."/>
        </authorList>
    </citation>
    <scope>GENOME REANNOTATION</scope>
    <source>
        <strain>cv. Columbia</strain>
    </source>
</reference>
<reference key="5">
    <citation type="journal article" date="1996" name="Plant Mol. Biol.">
        <title>Identification of a light-regulated MYB gene from an Arabidopsis transcription factor gene collection.</title>
        <authorList>
            <person name="Quaedvlieg N."/>
            <person name="Dockx J."/>
            <person name="Keultjes G."/>
            <person name="Kock P."/>
            <person name="Wilmering J."/>
            <person name="Weisbeek P."/>
            <person name="Smeekens S."/>
        </authorList>
    </citation>
    <scope>NUCLEOTIDE SEQUENCE [GENOMIC DNA] OF 1-157</scope>
</reference>
<reference key="6">
    <citation type="journal article" date="1998" name="Plant J.">
        <title>Towards functional characterisation of the members of the R2R3-MYB gene family from Arabidopsis thaliana.</title>
        <authorList>
            <person name="Kranz H.D."/>
            <person name="Denekamp M."/>
            <person name="Greco R."/>
            <person name="Jin H.-L."/>
            <person name="Leyva A."/>
            <person name="Meissner R.C."/>
            <person name="Petroni K."/>
            <person name="Urzainqui A."/>
            <person name="Bevan M."/>
            <person name="Martin C."/>
            <person name="Smeekens S."/>
            <person name="Tonelli C."/>
            <person name="Paz-Ares J."/>
            <person name="Weisshaar B."/>
        </authorList>
    </citation>
    <scope>TISSUE SPECIFICITY</scope>
    <scope>NOMENCLATURE</scope>
    <source>
        <strain>cv. Columbia</strain>
    </source>
</reference>
<reference key="7">
    <citation type="journal article" date="2006" name="Plant Mol. Biol.">
        <title>The MYB transcription factor superfamily of Arabidopsis: expression analysis and phylogenetic comparison with the rice MYB family.</title>
        <authorList>
            <person name="Chen Y."/>
            <person name="Yang X."/>
            <person name="He K."/>
            <person name="Liu M."/>
            <person name="Li J."/>
            <person name="Gao Z."/>
            <person name="Lin Z."/>
            <person name="Zhang Y."/>
            <person name="Wang X."/>
            <person name="Qiu X."/>
            <person name="Shen Y."/>
            <person name="Zhang L."/>
            <person name="Deng X."/>
            <person name="Luo J."/>
            <person name="Deng X.-W."/>
            <person name="Chen Z."/>
            <person name="Gu H."/>
            <person name="Qu L.-J."/>
        </authorList>
    </citation>
    <scope>GENE FAMILY</scope>
</reference>
<reference key="8">
    <citation type="journal article" date="2004" name="Plant J.">
        <title>Comprehensive identification of Arabidopsis thaliana MYB transcription factors interacting with R/B-like BHLH proteins.</title>
        <authorList>
            <person name="Zimmermann I.M."/>
            <person name="Heim M.A."/>
            <person name="Weisshaar B."/>
            <person name="Uhrig J.F."/>
        </authorList>
    </citation>
    <scope>FUNCTION</scope>
    <scope>INTERACTION WITH BHLH002; BHLH012 AND BHLH042</scope>
</reference>
<proteinExistence type="evidence at protein level"/>
<name>MYB5_ARATH</name>
<organism>
    <name type="scientific">Arabidopsis thaliana</name>
    <name type="common">Mouse-ear cress</name>
    <dbReference type="NCBI Taxonomy" id="3702"/>
    <lineage>
        <taxon>Eukaryota</taxon>
        <taxon>Viridiplantae</taxon>
        <taxon>Streptophyta</taxon>
        <taxon>Embryophyta</taxon>
        <taxon>Tracheophyta</taxon>
        <taxon>Spermatophyta</taxon>
        <taxon>Magnoliopsida</taxon>
        <taxon>eudicotyledons</taxon>
        <taxon>Gunneridae</taxon>
        <taxon>Pentapetalae</taxon>
        <taxon>rosids</taxon>
        <taxon>malvids</taxon>
        <taxon>Brassicales</taxon>
        <taxon>Brassicaceae</taxon>
        <taxon>Camelineae</taxon>
        <taxon>Arabidopsis</taxon>
    </lineage>
</organism>
<gene>
    <name type="primary">MYB5</name>
    <name type="synonym">M2</name>
    <name type="ordered locus">At3g13540</name>
    <name type="ORF">MRP15.2</name>
</gene>
<dbReference type="EMBL" id="U26935">
    <property type="protein sequence ID" value="AAC49311.1"/>
    <property type="molecule type" value="Genomic_DNA"/>
</dbReference>
<dbReference type="EMBL" id="AY519587">
    <property type="protein sequence ID" value="AAS10057.1"/>
    <property type="molecule type" value="mRNA"/>
</dbReference>
<dbReference type="EMBL" id="AP000603">
    <property type="protein sequence ID" value="BAB01761.1"/>
    <property type="molecule type" value="Genomic_DNA"/>
</dbReference>
<dbReference type="EMBL" id="CP002686">
    <property type="protein sequence ID" value="AEE75369.1"/>
    <property type="molecule type" value="Genomic_DNA"/>
</dbReference>
<dbReference type="EMBL" id="X90380">
    <property type="status" value="NOT_ANNOTATED_CDS"/>
    <property type="molecule type" value="Genomic_DNA"/>
</dbReference>
<dbReference type="PIR" id="S68688">
    <property type="entry name" value="S68688"/>
</dbReference>
<dbReference type="RefSeq" id="NP_187963.1">
    <property type="nucleotide sequence ID" value="NM_112200.3"/>
</dbReference>
<dbReference type="SMR" id="Q38850"/>
<dbReference type="BioGRID" id="5890">
    <property type="interactions" value="10"/>
</dbReference>
<dbReference type="IntAct" id="Q38850">
    <property type="interactions" value="10"/>
</dbReference>
<dbReference type="STRING" id="3702.Q38850"/>
<dbReference type="PaxDb" id="3702-AT3G13540.1"/>
<dbReference type="ProteomicsDB" id="251376"/>
<dbReference type="EnsemblPlants" id="AT3G13540.1">
    <property type="protein sequence ID" value="AT3G13540.1"/>
    <property type="gene ID" value="AT3G13540"/>
</dbReference>
<dbReference type="GeneID" id="820556"/>
<dbReference type="Gramene" id="AT3G13540.1">
    <property type="protein sequence ID" value="AT3G13540.1"/>
    <property type="gene ID" value="AT3G13540"/>
</dbReference>
<dbReference type="KEGG" id="ath:AT3G13540"/>
<dbReference type="Araport" id="AT3G13540"/>
<dbReference type="TAIR" id="AT3G13540">
    <property type="gene designation" value="MYB5"/>
</dbReference>
<dbReference type="eggNOG" id="KOG0048">
    <property type="taxonomic scope" value="Eukaryota"/>
</dbReference>
<dbReference type="HOGENOM" id="CLU_028567_6_4_1"/>
<dbReference type="InParanoid" id="Q38850"/>
<dbReference type="OMA" id="CCTKMGM"/>
<dbReference type="PhylomeDB" id="Q38850"/>
<dbReference type="PRO" id="PR:Q38850"/>
<dbReference type="Proteomes" id="UP000006548">
    <property type="component" value="Chromosome 3"/>
</dbReference>
<dbReference type="ExpressionAtlas" id="Q38850">
    <property type="expression patterns" value="baseline and differential"/>
</dbReference>
<dbReference type="GO" id="GO:0005634">
    <property type="term" value="C:nucleus"/>
    <property type="evidence" value="ECO:0007669"/>
    <property type="project" value="UniProtKB-SubCell"/>
</dbReference>
<dbReference type="GO" id="GO:0003677">
    <property type="term" value="F:DNA binding"/>
    <property type="evidence" value="ECO:0007669"/>
    <property type="project" value="UniProtKB-KW"/>
</dbReference>
<dbReference type="GO" id="GO:0003700">
    <property type="term" value="F:DNA-binding transcription factor activity"/>
    <property type="evidence" value="ECO:0000250"/>
    <property type="project" value="TAIR"/>
</dbReference>
<dbReference type="GO" id="GO:0048354">
    <property type="term" value="P:mucilage biosynthetic process involved in seed coat development"/>
    <property type="evidence" value="ECO:0000315"/>
    <property type="project" value="TAIR"/>
</dbReference>
<dbReference type="GO" id="GO:0010468">
    <property type="term" value="P:regulation of gene expression"/>
    <property type="evidence" value="ECO:0000270"/>
    <property type="project" value="TAIR"/>
</dbReference>
<dbReference type="GO" id="GO:0010214">
    <property type="term" value="P:seed coat development"/>
    <property type="evidence" value="ECO:0000315"/>
    <property type="project" value="TAIR"/>
</dbReference>
<dbReference type="GO" id="GO:0010090">
    <property type="term" value="P:trichome morphogenesis"/>
    <property type="evidence" value="ECO:0000315"/>
    <property type="project" value="TAIR"/>
</dbReference>
<dbReference type="CDD" id="cd00167">
    <property type="entry name" value="SANT"/>
    <property type="match status" value="2"/>
</dbReference>
<dbReference type="FunFam" id="1.10.10.60:FF:000121">
    <property type="entry name" value="Myb transcription factor"/>
    <property type="match status" value="1"/>
</dbReference>
<dbReference type="FunFam" id="1.10.10.60:FF:000254">
    <property type="entry name" value="transcription repressor MYB5-like"/>
    <property type="match status" value="1"/>
</dbReference>
<dbReference type="Gene3D" id="1.10.10.60">
    <property type="entry name" value="Homeodomain-like"/>
    <property type="match status" value="2"/>
</dbReference>
<dbReference type="InterPro" id="IPR009057">
    <property type="entry name" value="Homeodomain-like_sf"/>
</dbReference>
<dbReference type="InterPro" id="IPR017930">
    <property type="entry name" value="Myb_dom"/>
</dbReference>
<dbReference type="InterPro" id="IPR015495">
    <property type="entry name" value="Myb_TF_plants"/>
</dbReference>
<dbReference type="InterPro" id="IPR001005">
    <property type="entry name" value="SANT/Myb"/>
</dbReference>
<dbReference type="PANTHER" id="PTHR47994">
    <property type="entry name" value="F14D16.11-RELATED"/>
    <property type="match status" value="1"/>
</dbReference>
<dbReference type="PANTHER" id="PTHR47994:SF5">
    <property type="entry name" value="F14D16.11-RELATED"/>
    <property type="match status" value="1"/>
</dbReference>
<dbReference type="Pfam" id="PF00249">
    <property type="entry name" value="Myb_DNA-binding"/>
    <property type="match status" value="2"/>
</dbReference>
<dbReference type="SMART" id="SM00717">
    <property type="entry name" value="SANT"/>
    <property type="match status" value="2"/>
</dbReference>
<dbReference type="SUPFAM" id="SSF46689">
    <property type="entry name" value="Homeodomain-like"/>
    <property type="match status" value="1"/>
</dbReference>
<dbReference type="PROSITE" id="PS51294">
    <property type="entry name" value="HTH_MYB"/>
    <property type="match status" value="2"/>
</dbReference>
<accession>Q38850</accession>
<keyword id="KW-0010">Activator</keyword>
<keyword id="KW-0238">DNA-binding</keyword>
<keyword id="KW-0539">Nucleus</keyword>
<keyword id="KW-1185">Reference proteome</keyword>
<keyword id="KW-0677">Repeat</keyword>
<keyword id="KW-0678">Repressor</keyword>
<keyword id="KW-0804">Transcription</keyword>
<keyword id="KW-0805">Transcription regulation</keyword>
<feature type="chain" id="PRO_0000358831" description="Transcription repressor MYB5">
    <location>
        <begin position="1"/>
        <end position="249"/>
    </location>
</feature>
<feature type="domain" description="HTH myb-type 1" evidence="1">
    <location>
        <begin position="20"/>
        <end position="72"/>
    </location>
</feature>
<feature type="domain" description="HTH myb-type 2" evidence="1">
    <location>
        <begin position="73"/>
        <end position="127"/>
    </location>
</feature>
<feature type="DNA-binding region" description="H-T-H motif" evidence="1">
    <location>
        <begin position="48"/>
        <end position="72"/>
    </location>
</feature>
<feature type="DNA-binding region" description="H-T-H motif" evidence="1">
    <location>
        <begin position="100"/>
        <end position="123"/>
    </location>
</feature>
<feature type="region of interest" description="Disordered" evidence="2">
    <location>
        <begin position="133"/>
        <end position="180"/>
    </location>
</feature>
<feature type="compositionally biased region" description="Basic and acidic residues" evidence="2">
    <location>
        <begin position="135"/>
        <end position="150"/>
    </location>
</feature>
<feature type="sequence conflict" description="In Ref. 5; X90380." evidence="5" ref="5">
    <original>GEG</original>
    <variation>VEV</variation>
    <location>
        <begin position="44"/>
        <end position="46"/>
    </location>
</feature>
<protein>
    <recommendedName>
        <fullName>Transcription repressor MYB5</fullName>
    </recommendedName>
    <alternativeName>
        <fullName>AtM2</fullName>
    </alternativeName>
    <alternativeName>
        <fullName>Myb-related protein 5</fullName>
        <shortName>AtMYB5</shortName>
    </alternativeName>
</protein>